<feature type="chain" id="PRO_0000325588" description="Dihydroorotase">
    <location>
        <begin position="1"/>
        <end position="428"/>
    </location>
</feature>
<feature type="active site" evidence="1">
    <location>
        <position position="304"/>
    </location>
</feature>
<feature type="binding site" evidence="1">
    <location>
        <position position="59"/>
    </location>
    <ligand>
        <name>Zn(2+)</name>
        <dbReference type="ChEBI" id="CHEBI:29105"/>
        <label>1</label>
    </ligand>
</feature>
<feature type="binding site" evidence="1">
    <location>
        <begin position="61"/>
        <end position="63"/>
    </location>
    <ligand>
        <name>substrate</name>
    </ligand>
</feature>
<feature type="binding site" evidence="1">
    <location>
        <position position="61"/>
    </location>
    <ligand>
        <name>Zn(2+)</name>
        <dbReference type="ChEBI" id="CHEBI:29105"/>
        <label>1</label>
    </ligand>
</feature>
<feature type="binding site" evidence="1">
    <location>
        <position position="93"/>
    </location>
    <ligand>
        <name>substrate</name>
    </ligand>
</feature>
<feature type="binding site" evidence="1">
    <location>
        <position position="151"/>
    </location>
    <ligand>
        <name>Zn(2+)</name>
        <dbReference type="ChEBI" id="CHEBI:29105"/>
        <label>1</label>
    </ligand>
</feature>
<feature type="binding site" evidence="1">
    <location>
        <position position="151"/>
    </location>
    <ligand>
        <name>Zn(2+)</name>
        <dbReference type="ChEBI" id="CHEBI:29105"/>
        <label>2</label>
    </ligand>
</feature>
<feature type="binding site" evidence="1">
    <location>
        <position position="178"/>
    </location>
    <ligand>
        <name>Zn(2+)</name>
        <dbReference type="ChEBI" id="CHEBI:29105"/>
        <label>2</label>
    </ligand>
</feature>
<feature type="binding site" evidence="1">
    <location>
        <position position="231"/>
    </location>
    <ligand>
        <name>Zn(2+)</name>
        <dbReference type="ChEBI" id="CHEBI:29105"/>
        <label>2</label>
    </ligand>
</feature>
<feature type="binding site" evidence="1">
    <location>
        <position position="277"/>
    </location>
    <ligand>
        <name>substrate</name>
    </ligand>
</feature>
<feature type="binding site" evidence="1">
    <location>
        <position position="304"/>
    </location>
    <ligand>
        <name>Zn(2+)</name>
        <dbReference type="ChEBI" id="CHEBI:29105"/>
        <label>1</label>
    </ligand>
</feature>
<feature type="binding site" evidence="1">
    <location>
        <position position="308"/>
    </location>
    <ligand>
        <name>substrate</name>
    </ligand>
</feature>
<feature type="binding site" evidence="1">
    <location>
        <begin position="322"/>
        <end position="323"/>
    </location>
    <ligand>
        <name>substrate</name>
    </ligand>
</feature>
<proteinExistence type="inferred from homology"/>
<name>PYRC_BACAH</name>
<protein>
    <recommendedName>
        <fullName evidence="1">Dihydroorotase</fullName>
        <shortName evidence="1">DHOase</shortName>
        <ecNumber evidence="1">3.5.2.3</ecNumber>
    </recommendedName>
</protein>
<reference key="1">
    <citation type="journal article" date="2007" name="J. Bacteriol.">
        <title>The complete genome sequence of Bacillus thuringiensis Al Hakam.</title>
        <authorList>
            <person name="Challacombe J.F."/>
            <person name="Altherr M.R."/>
            <person name="Xie G."/>
            <person name="Bhotika S.S."/>
            <person name="Brown N."/>
            <person name="Bruce D."/>
            <person name="Campbell C.S."/>
            <person name="Campbell M.L."/>
            <person name="Chen J."/>
            <person name="Chertkov O."/>
            <person name="Cleland C."/>
            <person name="Dimitrijevic M."/>
            <person name="Doggett N.A."/>
            <person name="Fawcett J.J."/>
            <person name="Glavina T."/>
            <person name="Goodwin L.A."/>
            <person name="Green L.D."/>
            <person name="Han C.S."/>
            <person name="Hill K.K."/>
            <person name="Hitchcock P."/>
            <person name="Jackson P.J."/>
            <person name="Keim P."/>
            <person name="Kewalramani A.R."/>
            <person name="Longmire J."/>
            <person name="Lucas S."/>
            <person name="Malfatti S."/>
            <person name="Martinez D."/>
            <person name="McMurry K."/>
            <person name="Meincke L.J."/>
            <person name="Misra M."/>
            <person name="Moseman B.L."/>
            <person name="Mundt M."/>
            <person name="Munk A.C."/>
            <person name="Okinaka R.T."/>
            <person name="Parson-Quintana B."/>
            <person name="Reilly L.P."/>
            <person name="Richardson P."/>
            <person name="Robinson D.L."/>
            <person name="Saunders E."/>
            <person name="Tapia R."/>
            <person name="Tesmer J.G."/>
            <person name="Thayer N."/>
            <person name="Thompson L.S."/>
            <person name="Tice H."/>
            <person name="Ticknor L.O."/>
            <person name="Wills P.L."/>
            <person name="Gilna P."/>
            <person name="Brettin T.S."/>
        </authorList>
    </citation>
    <scope>NUCLEOTIDE SEQUENCE [LARGE SCALE GENOMIC DNA]</scope>
    <source>
        <strain>Al Hakam</strain>
    </source>
</reference>
<accession>A0RHR0</accession>
<sequence>MNYLFKNGRYMNEEGKIVATDLLVQDGKIAKVAENITADNAEVIDVNGKLIAPGLVDVHVHLREPGGEHKETIETGTLAAAKGGFTTICAMPNTRPVPDCREHMEDLQNRIKEKAHVNVLPYGAITVRQAGSEMTDFETLKELGAFAFTDDGVGVQDASMMLAAMKRAAKLNMAVVAHCEENTLINKGCVHEGKFSEKHGLNGIPSVCESVHIARDILLAEAADCHYHVCHVSTKGSVRVIRDAKRAGIKVTAEVTPHHLVLCEDDIPSADPNFKMNPPLRGKEDHAALIEGLLDGTIDMIATDHAPHTAEEKAQGIERAPFGITGFETAFPLLYTNLVKKGIITLEQLIQFLTEKPADTFGLEAGRLKEGRTADITIIDLEQEEEIDPTTFLSKGKNTPFAGWKCQGWPVMTIVGGKIAWQKESALV</sequence>
<comment type="function">
    <text evidence="1">Catalyzes the reversible cyclization of carbamoyl aspartate to dihydroorotate.</text>
</comment>
<comment type="catalytic activity">
    <reaction evidence="1">
        <text>(S)-dihydroorotate + H2O = N-carbamoyl-L-aspartate + H(+)</text>
        <dbReference type="Rhea" id="RHEA:24296"/>
        <dbReference type="ChEBI" id="CHEBI:15377"/>
        <dbReference type="ChEBI" id="CHEBI:15378"/>
        <dbReference type="ChEBI" id="CHEBI:30864"/>
        <dbReference type="ChEBI" id="CHEBI:32814"/>
        <dbReference type="EC" id="3.5.2.3"/>
    </reaction>
</comment>
<comment type="cofactor">
    <cofactor evidence="1">
        <name>Zn(2+)</name>
        <dbReference type="ChEBI" id="CHEBI:29105"/>
    </cofactor>
    <text evidence="1">Binds 2 Zn(2+) ions per subunit.</text>
</comment>
<comment type="pathway">
    <text evidence="1">Pyrimidine metabolism; UMP biosynthesis via de novo pathway; (S)-dihydroorotate from bicarbonate: step 3/3.</text>
</comment>
<comment type="similarity">
    <text evidence="1">Belongs to the metallo-dependent hydrolases superfamily. DHOase family. Class I DHOase subfamily.</text>
</comment>
<gene>
    <name evidence="1" type="primary">pyrC</name>
    <name type="ordered locus">BALH_3518</name>
</gene>
<dbReference type="EC" id="3.5.2.3" evidence="1"/>
<dbReference type="EMBL" id="CP000485">
    <property type="protein sequence ID" value="ABK86753.1"/>
    <property type="molecule type" value="Genomic_DNA"/>
</dbReference>
<dbReference type="RefSeq" id="WP_001108374.1">
    <property type="nucleotide sequence ID" value="NC_008600.1"/>
</dbReference>
<dbReference type="SMR" id="A0RHR0"/>
<dbReference type="GeneID" id="93007223"/>
<dbReference type="KEGG" id="btl:BALH_3518"/>
<dbReference type="HOGENOM" id="CLU_015572_1_0_9"/>
<dbReference type="UniPathway" id="UPA00070">
    <property type="reaction ID" value="UER00117"/>
</dbReference>
<dbReference type="GO" id="GO:0005737">
    <property type="term" value="C:cytoplasm"/>
    <property type="evidence" value="ECO:0007669"/>
    <property type="project" value="TreeGrafter"/>
</dbReference>
<dbReference type="GO" id="GO:0004038">
    <property type="term" value="F:allantoinase activity"/>
    <property type="evidence" value="ECO:0007669"/>
    <property type="project" value="TreeGrafter"/>
</dbReference>
<dbReference type="GO" id="GO:0004151">
    <property type="term" value="F:dihydroorotase activity"/>
    <property type="evidence" value="ECO:0007669"/>
    <property type="project" value="UniProtKB-UniRule"/>
</dbReference>
<dbReference type="GO" id="GO:0008270">
    <property type="term" value="F:zinc ion binding"/>
    <property type="evidence" value="ECO:0007669"/>
    <property type="project" value="UniProtKB-UniRule"/>
</dbReference>
<dbReference type="GO" id="GO:0044205">
    <property type="term" value="P:'de novo' UMP biosynthetic process"/>
    <property type="evidence" value="ECO:0007669"/>
    <property type="project" value="UniProtKB-UniRule"/>
</dbReference>
<dbReference type="GO" id="GO:0006145">
    <property type="term" value="P:purine nucleobase catabolic process"/>
    <property type="evidence" value="ECO:0007669"/>
    <property type="project" value="TreeGrafter"/>
</dbReference>
<dbReference type="CDD" id="cd01317">
    <property type="entry name" value="DHOase_IIa"/>
    <property type="match status" value="1"/>
</dbReference>
<dbReference type="FunFam" id="2.30.40.10:FF:000007">
    <property type="entry name" value="Dihydroorotase"/>
    <property type="match status" value="1"/>
</dbReference>
<dbReference type="FunFam" id="3.20.20.140:FF:000025">
    <property type="entry name" value="Dihydroorotase"/>
    <property type="match status" value="1"/>
</dbReference>
<dbReference type="Gene3D" id="3.20.20.140">
    <property type="entry name" value="Metal-dependent hydrolases"/>
    <property type="match status" value="1"/>
</dbReference>
<dbReference type="Gene3D" id="2.30.40.10">
    <property type="entry name" value="Urease, subunit C, domain 1"/>
    <property type="match status" value="2"/>
</dbReference>
<dbReference type="HAMAP" id="MF_00220_B">
    <property type="entry name" value="PyrC_classI_B"/>
    <property type="match status" value="1"/>
</dbReference>
<dbReference type="InterPro" id="IPR006680">
    <property type="entry name" value="Amidohydro-rel"/>
</dbReference>
<dbReference type="InterPro" id="IPR004722">
    <property type="entry name" value="DHOase"/>
</dbReference>
<dbReference type="InterPro" id="IPR050138">
    <property type="entry name" value="DHOase/Allantoinase_Hydrolase"/>
</dbReference>
<dbReference type="InterPro" id="IPR002195">
    <property type="entry name" value="Dihydroorotase_CS"/>
</dbReference>
<dbReference type="InterPro" id="IPR011059">
    <property type="entry name" value="Metal-dep_hydrolase_composite"/>
</dbReference>
<dbReference type="InterPro" id="IPR032466">
    <property type="entry name" value="Metal_Hydrolase"/>
</dbReference>
<dbReference type="NCBIfam" id="NF006837">
    <property type="entry name" value="PRK09357.1-2"/>
    <property type="match status" value="1"/>
</dbReference>
<dbReference type="NCBIfam" id="TIGR00857">
    <property type="entry name" value="pyrC_multi"/>
    <property type="match status" value="1"/>
</dbReference>
<dbReference type="PANTHER" id="PTHR43668">
    <property type="entry name" value="ALLANTOINASE"/>
    <property type="match status" value="1"/>
</dbReference>
<dbReference type="PANTHER" id="PTHR43668:SF2">
    <property type="entry name" value="ALLANTOINASE"/>
    <property type="match status" value="1"/>
</dbReference>
<dbReference type="Pfam" id="PF01979">
    <property type="entry name" value="Amidohydro_1"/>
    <property type="match status" value="1"/>
</dbReference>
<dbReference type="SUPFAM" id="SSF51338">
    <property type="entry name" value="Composite domain of metallo-dependent hydrolases"/>
    <property type="match status" value="1"/>
</dbReference>
<dbReference type="SUPFAM" id="SSF51556">
    <property type="entry name" value="Metallo-dependent hydrolases"/>
    <property type="match status" value="1"/>
</dbReference>
<dbReference type="PROSITE" id="PS00482">
    <property type="entry name" value="DIHYDROOROTASE_1"/>
    <property type="match status" value="1"/>
</dbReference>
<dbReference type="PROSITE" id="PS00483">
    <property type="entry name" value="DIHYDROOROTASE_2"/>
    <property type="match status" value="1"/>
</dbReference>
<keyword id="KW-0378">Hydrolase</keyword>
<keyword id="KW-0479">Metal-binding</keyword>
<keyword id="KW-0665">Pyrimidine biosynthesis</keyword>
<keyword id="KW-0862">Zinc</keyword>
<evidence type="ECO:0000255" key="1">
    <source>
        <dbReference type="HAMAP-Rule" id="MF_00220"/>
    </source>
</evidence>
<organism>
    <name type="scientific">Bacillus thuringiensis (strain Al Hakam)</name>
    <dbReference type="NCBI Taxonomy" id="412694"/>
    <lineage>
        <taxon>Bacteria</taxon>
        <taxon>Bacillati</taxon>
        <taxon>Bacillota</taxon>
        <taxon>Bacilli</taxon>
        <taxon>Bacillales</taxon>
        <taxon>Bacillaceae</taxon>
        <taxon>Bacillus</taxon>
        <taxon>Bacillus cereus group</taxon>
    </lineage>
</organism>